<accession>C4ZYR1</accession>
<feature type="chain" id="PRO_1000213519" description="Glutarate 2-hydroxylase">
    <location>
        <begin position="1"/>
        <end position="325"/>
    </location>
</feature>
<feature type="binding site" evidence="1">
    <location>
        <position position="160"/>
    </location>
    <ligand>
        <name>Fe cation</name>
        <dbReference type="ChEBI" id="CHEBI:24875"/>
    </ligand>
</feature>
<feature type="binding site" evidence="1">
    <location>
        <position position="162"/>
    </location>
    <ligand>
        <name>Fe cation</name>
        <dbReference type="ChEBI" id="CHEBI:24875"/>
    </ligand>
</feature>
<feature type="binding site" evidence="1">
    <location>
        <position position="292"/>
    </location>
    <ligand>
        <name>Fe cation</name>
        <dbReference type="ChEBI" id="CHEBI:24875"/>
    </ligand>
</feature>
<organism>
    <name type="scientific">Escherichia coli (strain K12 / MC4100 / BW2952)</name>
    <dbReference type="NCBI Taxonomy" id="595496"/>
    <lineage>
        <taxon>Bacteria</taxon>
        <taxon>Pseudomonadati</taxon>
        <taxon>Pseudomonadota</taxon>
        <taxon>Gammaproteobacteria</taxon>
        <taxon>Enterobacterales</taxon>
        <taxon>Enterobacteriaceae</taxon>
        <taxon>Escherichia</taxon>
    </lineage>
</organism>
<evidence type="ECO:0000255" key="1">
    <source>
        <dbReference type="HAMAP-Rule" id="MF_01083"/>
    </source>
</evidence>
<proteinExistence type="inferred from homology"/>
<protein>
    <recommendedName>
        <fullName evidence="1">Glutarate 2-hydroxylase</fullName>
        <shortName evidence="1">G-2-H</shortName>
        <ecNumber evidence="1">1.14.11.64</ecNumber>
    </recommendedName>
</protein>
<keyword id="KW-0223">Dioxygenase</keyword>
<keyword id="KW-0408">Iron</keyword>
<keyword id="KW-0479">Metal-binding</keyword>
<keyword id="KW-0560">Oxidoreductase</keyword>
<dbReference type="EC" id="1.14.11.64" evidence="1"/>
<dbReference type="EMBL" id="CP001396">
    <property type="protein sequence ID" value="ACR65010.1"/>
    <property type="molecule type" value="Genomic_DNA"/>
</dbReference>
<dbReference type="RefSeq" id="WP_000993126.1">
    <property type="nucleotide sequence ID" value="NC_012759.1"/>
</dbReference>
<dbReference type="SMR" id="C4ZYR1"/>
<dbReference type="KEGG" id="ebw:BWG_2402"/>
<dbReference type="HOGENOM" id="CLU_075277_0_0_6"/>
<dbReference type="GO" id="GO:0008198">
    <property type="term" value="F:ferrous iron binding"/>
    <property type="evidence" value="ECO:0007669"/>
    <property type="project" value="UniProtKB-UniRule"/>
</dbReference>
<dbReference type="GO" id="GO:0106343">
    <property type="term" value="F:glutarate dioxygenase activity"/>
    <property type="evidence" value="ECO:0007669"/>
    <property type="project" value="UniProtKB-EC"/>
</dbReference>
<dbReference type="GO" id="GO:0050498">
    <property type="term" value="F:oxidoreductase activity, acting on paired donors, with incorporation or reduction of molecular oxygen, with 2-oxoglutarate as one donor, and the other dehydrogenated"/>
    <property type="evidence" value="ECO:0007669"/>
    <property type="project" value="UniProtKB-UniRule"/>
</dbReference>
<dbReference type="GO" id="GO:0019477">
    <property type="term" value="P:L-lysine catabolic process"/>
    <property type="evidence" value="ECO:0007669"/>
    <property type="project" value="UniProtKB-UniRule"/>
</dbReference>
<dbReference type="CDD" id="cd00250">
    <property type="entry name" value="CAS_like"/>
    <property type="match status" value="1"/>
</dbReference>
<dbReference type="FunFam" id="3.60.130.10:FF:000004">
    <property type="entry name" value="Glutarate 2-hydroxylase"/>
    <property type="match status" value="1"/>
</dbReference>
<dbReference type="Gene3D" id="3.60.130.10">
    <property type="entry name" value="Clavaminate synthase-like"/>
    <property type="match status" value="1"/>
</dbReference>
<dbReference type="HAMAP" id="MF_01083">
    <property type="entry name" value="glutarate_hydroxylase"/>
    <property type="match status" value="1"/>
</dbReference>
<dbReference type="InterPro" id="IPR050411">
    <property type="entry name" value="AlphaKG_dependent_hydroxylases"/>
</dbReference>
<dbReference type="InterPro" id="IPR015038">
    <property type="entry name" value="GlaH"/>
</dbReference>
<dbReference type="InterPro" id="IPR042098">
    <property type="entry name" value="TauD-like_sf"/>
</dbReference>
<dbReference type="NCBIfam" id="NF002814">
    <property type="entry name" value="PRK02963.1"/>
    <property type="match status" value="1"/>
</dbReference>
<dbReference type="PANTHER" id="PTHR10696">
    <property type="entry name" value="GAMMA-BUTYROBETAINE HYDROXYLASE-RELATED"/>
    <property type="match status" value="1"/>
</dbReference>
<dbReference type="PANTHER" id="PTHR10696:SF56">
    <property type="entry name" value="TAUD_TFDA-LIKE DOMAIN-CONTAINING PROTEIN"/>
    <property type="match status" value="1"/>
</dbReference>
<dbReference type="Pfam" id="PF08943">
    <property type="entry name" value="CsiD"/>
    <property type="match status" value="1"/>
</dbReference>
<dbReference type="SUPFAM" id="SSF51197">
    <property type="entry name" value="Clavaminate synthase-like"/>
    <property type="match status" value="1"/>
</dbReference>
<sequence>MNALTAVQNNAVDSGQDYSGFTLTPSAQSPRLLELTFTEQTTKQFLEQVAEWPVQALEYKSFLRFRVAKILDDLCANQLQPLLLKTLLNRAEGALLINAVGVDDVKQADEMVKLATAVAHLIGRSNFDAMSGQYYARFVVKNVDNSDSYLRQPHRVMELHNDGTYVEEITDYVLMMKIDEQNMQGGNSLLLHLDDWEHLDNYFRHPLARRPMRFAAPPSKNVSKDVFHPVFDVDQQGRPVMRYIDQFVQPKDFEEGVWLSELSDAIETSKGILSVPVPVGKFLLINNLFWLHGRDRFTPHPDLRRELMRQRGYFAYASNHYQTHQ</sequence>
<reference key="1">
    <citation type="journal article" date="2009" name="J. Bacteriol.">
        <title>Genomic sequencing reveals regulatory mutations and recombinational events in the widely used MC4100 lineage of Escherichia coli K-12.</title>
        <authorList>
            <person name="Ferenci T."/>
            <person name="Zhou Z."/>
            <person name="Betteridge T."/>
            <person name="Ren Y."/>
            <person name="Liu Y."/>
            <person name="Feng L."/>
            <person name="Reeves P.R."/>
            <person name="Wang L."/>
        </authorList>
    </citation>
    <scope>NUCLEOTIDE SEQUENCE [LARGE SCALE GENOMIC DNA]</scope>
    <source>
        <strain>K12 / MC4100 / BW2952</strain>
    </source>
</reference>
<name>GLAH_ECOBW</name>
<comment type="function">
    <text evidence="1">Acts as an alpha-ketoglutarate-dependent dioxygenase catalyzing hydroxylation of glutarate (GA) to L-2-hydroxyglutarate (L2HG). Functions in a L-lysine degradation pathway that proceeds via cadaverine, glutarate and L-2-hydroxyglutarate.</text>
</comment>
<comment type="catalytic activity">
    <reaction evidence="1">
        <text>glutarate + 2-oxoglutarate + O2 = (S)-2-hydroxyglutarate + succinate + CO2</text>
        <dbReference type="Rhea" id="RHEA:13821"/>
        <dbReference type="ChEBI" id="CHEBI:15379"/>
        <dbReference type="ChEBI" id="CHEBI:16526"/>
        <dbReference type="ChEBI" id="CHEBI:16782"/>
        <dbReference type="ChEBI" id="CHEBI:16810"/>
        <dbReference type="ChEBI" id="CHEBI:30031"/>
        <dbReference type="ChEBI" id="CHEBI:30921"/>
        <dbReference type="EC" id="1.14.11.64"/>
    </reaction>
    <physiologicalReaction direction="left-to-right" evidence="1">
        <dbReference type="Rhea" id="RHEA:13822"/>
    </physiologicalReaction>
</comment>
<comment type="cofactor">
    <cofactor evidence="1">
        <name>Fe(2+)</name>
        <dbReference type="ChEBI" id="CHEBI:29033"/>
    </cofactor>
    <text evidence="1">Binds 1 Fe(2+) ion per subunit.</text>
</comment>
<comment type="pathway">
    <text evidence="1">Amino-acid degradation.</text>
</comment>
<comment type="subunit">
    <text evidence="1">Homotetramer.</text>
</comment>
<comment type="similarity">
    <text evidence="1">Belongs to the glutarate hydroxylase family.</text>
</comment>
<gene>
    <name evidence="1" type="primary">glaH</name>
    <name type="ordered locus">BWG_2402</name>
</gene>